<name>EFTU_DINSH</name>
<feature type="chain" id="PRO_0000337373" description="Elongation factor Tu">
    <location>
        <begin position="1"/>
        <end position="391"/>
    </location>
</feature>
<feature type="domain" description="tr-type G">
    <location>
        <begin position="10"/>
        <end position="201"/>
    </location>
</feature>
<feature type="region of interest" description="G1" evidence="1">
    <location>
        <begin position="19"/>
        <end position="26"/>
    </location>
</feature>
<feature type="region of interest" description="G2" evidence="1">
    <location>
        <begin position="55"/>
        <end position="59"/>
    </location>
</feature>
<feature type="region of interest" description="G3" evidence="1">
    <location>
        <begin position="76"/>
        <end position="79"/>
    </location>
</feature>
<feature type="region of interest" description="G4" evidence="1">
    <location>
        <begin position="131"/>
        <end position="134"/>
    </location>
</feature>
<feature type="region of interest" description="G5" evidence="1">
    <location>
        <begin position="169"/>
        <end position="171"/>
    </location>
</feature>
<feature type="binding site" evidence="2">
    <location>
        <begin position="19"/>
        <end position="26"/>
    </location>
    <ligand>
        <name>GTP</name>
        <dbReference type="ChEBI" id="CHEBI:37565"/>
    </ligand>
</feature>
<feature type="binding site" evidence="2">
    <location>
        <position position="26"/>
    </location>
    <ligand>
        <name>Mg(2+)</name>
        <dbReference type="ChEBI" id="CHEBI:18420"/>
    </ligand>
</feature>
<feature type="binding site" evidence="2">
    <location>
        <begin position="76"/>
        <end position="80"/>
    </location>
    <ligand>
        <name>GTP</name>
        <dbReference type="ChEBI" id="CHEBI:37565"/>
    </ligand>
</feature>
<feature type="binding site" evidence="2">
    <location>
        <begin position="131"/>
        <end position="134"/>
    </location>
    <ligand>
        <name>GTP</name>
        <dbReference type="ChEBI" id="CHEBI:37565"/>
    </ligand>
</feature>
<evidence type="ECO:0000250" key="1"/>
<evidence type="ECO:0000255" key="2">
    <source>
        <dbReference type="HAMAP-Rule" id="MF_00118"/>
    </source>
</evidence>
<organism>
    <name type="scientific">Dinoroseobacter shibae (strain DSM 16493 / NCIMB 14021 / DFL 12)</name>
    <dbReference type="NCBI Taxonomy" id="398580"/>
    <lineage>
        <taxon>Bacteria</taxon>
        <taxon>Pseudomonadati</taxon>
        <taxon>Pseudomonadota</taxon>
        <taxon>Alphaproteobacteria</taxon>
        <taxon>Rhodobacterales</taxon>
        <taxon>Roseobacteraceae</taxon>
        <taxon>Dinoroseobacter</taxon>
    </lineage>
</organism>
<keyword id="KW-0963">Cytoplasm</keyword>
<keyword id="KW-0251">Elongation factor</keyword>
<keyword id="KW-0342">GTP-binding</keyword>
<keyword id="KW-0378">Hydrolase</keyword>
<keyword id="KW-0460">Magnesium</keyword>
<keyword id="KW-0479">Metal-binding</keyword>
<keyword id="KW-0547">Nucleotide-binding</keyword>
<keyword id="KW-0648">Protein biosynthesis</keyword>
<keyword id="KW-1185">Reference proteome</keyword>
<gene>
    <name evidence="2" type="primary">tuf1</name>
    <name type="ordered locus">Dshi_0223</name>
</gene>
<gene>
    <name evidence="2" type="primary">tuf2</name>
    <name type="ordered locus">Dshi_0274</name>
</gene>
<accession>A8LLG2</accession>
<sequence>MAKEKFERSKPHVNIGTIGHVDHGKTTLTAAITKQFGDFKAYDEIDGAPEEKARGITISTAHVEYETDARHYAHVDCPGHADYVKNMITGAAQMDGAILVVNAADGPMPQTREHILLGRQVGIPYMVVFMNKVDQVDDEELLELVEMEIRELLSSYEYPGDDIPIIAGSALAALEGRDPEIGEQKIAELMKAVDDYIPTPARAVDQPFLMPIEDVFSISGRGTVVTGRVERGVINVGDEIEIVGIRDTKKTTCTGVEMFRKLLDRGEAGDNIGALLRGVDREGVERGQVLCKPGSVTPHTKFEAEAYILTKEEGGRHTPFFANYRPQFYFRTTDVTGTVTLPEGTEMVMPGDNLKFGVELIAPIAMEDGLRFAIREGGRTVGAGVVSKIIE</sequence>
<proteinExistence type="inferred from homology"/>
<reference key="1">
    <citation type="journal article" date="2010" name="ISME J.">
        <title>The complete genome sequence of the algal symbiont Dinoroseobacter shibae: a hitchhiker's guide to life in the sea.</title>
        <authorList>
            <person name="Wagner-Dobler I."/>
            <person name="Ballhausen B."/>
            <person name="Berger M."/>
            <person name="Brinkhoff T."/>
            <person name="Buchholz I."/>
            <person name="Bunk B."/>
            <person name="Cypionka H."/>
            <person name="Daniel R."/>
            <person name="Drepper T."/>
            <person name="Gerdts G."/>
            <person name="Hahnke S."/>
            <person name="Han C."/>
            <person name="Jahn D."/>
            <person name="Kalhoefer D."/>
            <person name="Kiss H."/>
            <person name="Klenk H.P."/>
            <person name="Kyrpides N."/>
            <person name="Liebl W."/>
            <person name="Liesegang H."/>
            <person name="Meincke L."/>
            <person name="Pati A."/>
            <person name="Petersen J."/>
            <person name="Piekarski T."/>
            <person name="Pommerenke C."/>
            <person name="Pradella S."/>
            <person name="Pukall R."/>
            <person name="Rabus R."/>
            <person name="Stackebrandt E."/>
            <person name="Thole S."/>
            <person name="Thompson L."/>
            <person name="Tielen P."/>
            <person name="Tomasch J."/>
            <person name="von Jan M."/>
            <person name="Wanphrut N."/>
            <person name="Wichels A."/>
            <person name="Zech H."/>
            <person name="Simon M."/>
        </authorList>
    </citation>
    <scope>NUCLEOTIDE SEQUENCE [LARGE SCALE GENOMIC DNA]</scope>
    <source>
        <strain>DSM 16493 / NCIMB 14021 / DFL 12</strain>
    </source>
</reference>
<comment type="function">
    <text evidence="2">GTP hydrolase that promotes the GTP-dependent binding of aminoacyl-tRNA to the A-site of ribosomes during protein biosynthesis.</text>
</comment>
<comment type="catalytic activity">
    <reaction evidence="2">
        <text>GTP + H2O = GDP + phosphate + H(+)</text>
        <dbReference type="Rhea" id="RHEA:19669"/>
        <dbReference type="ChEBI" id="CHEBI:15377"/>
        <dbReference type="ChEBI" id="CHEBI:15378"/>
        <dbReference type="ChEBI" id="CHEBI:37565"/>
        <dbReference type="ChEBI" id="CHEBI:43474"/>
        <dbReference type="ChEBI" id="CHEBI:58189"/>
        <dbReference type="EC" id="3.6.5.3"/>
    </reaction>
    <physiologicalReaction direction="left-to-right" evidence="2">
        <dbReference type="Rhea" id="RHEA:19670"/>
    </physiologicalReaction>
</comment>
<comment type="subunit">
    <text evidence="2">Monomer.</text>
</comment>
<comment type="subcellular location">
    <subcellularLocation>
        <location evidence="2">Cytoplasm</location>
    </subcellularLocation>
</comment>
<comment type="similarity">
    <text evidence="2">Belongs to the TRAFAC class translation factor GTPase superfamily. Classic translation factor GTPase family. EF-Tu/EF-1A subfamily.</text>
</comment>
<protein>
    <recommendedName>
        <fullName evidence="2">Elongation factor Tu</fullName>
        <shortName evidence="2">EF-Tu</shortName>
        <ecNumber evidence="2">3.6.5.3</ecNumber>
    </recommendedName>
</protein>
<dbReference type="EC" id="3.6.5.3" evidence="2"/>
<dbReference type="EMBL" id="CP000830">
    <property type="protein sequence ID" value="ABV91972.1"/>
    <property type="molecule type" value="Genomic_DNA"/>
</dbReference>
<dbReference type="EMBL" id="CP000830">
    <property type="protein sequence ID" value="ABV92023.1"/>
    <property type="molecule type" value="Genomic_DNA"/>
</dbReference>
<dbReference type="RefSeq" id="WP_012176905.1">
    <property type="nucleotide sequence ID" value="NC_009952.1"/>
</dbReference>
<dbReference type="SMR" id="A8LLG2"/>
<dbReference type="STRING" id="398580.Dshi_0223"/>
<dbReference type="KEGG" id="dsh:Dshi_0223"/>
<dbReference type="KEGG" id="dsh:Dshi_0274"/>
<dbReference type="eggNOG" id="COG0050">
    <property type="taxonomic scope" value="Bacteria"/>
</dbReference>
<dbReference type="HOGENOM" id="CLU_007265_0_1_5"/>
<dbReference type="OrthoDB" id="9803139at2"/>
<dbReference type="Proteomes" id="UP000006833">
    <property type="component" value="Chromosome"/>
</dbReference>
<dbReference type="GO" id="GO:0005737">
    <property type="term" value="C:cytoplasm"/>
    <property type="evidence" value="ECO:0007669"/>
    <property type="project" value="UniProtKB-SubCell"/>
</dbReference>
<dbReference type="GO" id="GO:0005525">
    <property type="term" value="F:GTP binding"/>
    <property type="evidence" value="ECO:0007669"/>
    <property type="project" value="UniProtKB-UniRule"/>
</dbReference>
<dbReference type="GO" id="GO:0003924">
    <property type="term" value="F:GTPase activity"/>
    <property type="evidence" value="ECO:0007669"/>
    <property type="project" value="InterPro"/>
</dbReference>
<dbReference type="GO" id="GO:0097216">
    <property type="term" value="F:guanosine tetraphosphate binding"/>
    <property type="evidence" value="ECO:0007669"/>
    <property type="project" value="UniProtKB-ARBA"/>
</dbReference>
<dbReference type="GO" id="GO:0003746">
    <property type="term" value="F:translation elongation factor activity"/>
    <property type="evidence" value="ECO:0007669"/>
    <property type="project" value="UniProtKB-UniRule"/>
</dbReference>
<dbReference type="CDD" id="cd01884">
    <property type="entry name" value="EF_Tu"/>
    <property type="match status" value="1"/>
</dbReference>
<dbReference type="CDD" id="cd03697">
    <property type="entry name" value="EFTU_II"/>
    <property type="match status" value="1"/>
</dbReference>
<dbReference type="CDD" id="cd03707">
    <property type="entry name" value="EFTU_III"/>
    <property type="match status" value="1"/>
</dbReference>
<dbReference type="FunFam" id="2.40.30.10:FF:000001">
    <property type="entry name" value="Elongation factor Tu"/>
    <property type="match status" value="1"/>
</dbReference>
<dbReference type="FunFam" id="3.40.50.300:FF:000003">
    <property type="entry name" value="Elongation factor Tu"/>
    <property type="match status" value="1"/>
</dbReference>
<dbReference type="Gene3D" id="3.40.50.300">
    <property type="entry name" value="P-loop containing nucleotide triphosphate hydrolases"/>
    <property type="match status" value="1"/>
</dbReference>
<dbReference type="Gene3D" id="2.40.30.10">
    <property type="entry name" value="Translation factors"/>
    <property type="match status" value="2"/>
</dbReference>
<dbReference type="HAMAP" id="MF_00118_B">
    <property type="entry name" value="EF_Tu_B"/>
    <property type="match status" value="1"/>
</dbReference>
<dbReference type="InterPro" id="IPR041709">
    <property type="entry name" value="EF-Tu_GTP-bd"/>
</dbReference>
<dbReference type="InterPro" id="IPR050055">
    <property type="entry name" value="EF-Tu_GTPase"/>
</dbReference>
<dbReference type="InterPro" id="IPR004161">
    <property type="entry name" value="EFTu-like_2"/>
</dbReference>
<dbReference type="InterPro" id="IPR033720">
    <property type="entry name" value="EFTU_2"/>
</dbReference>
<dbReference type="InterPro" id="IPR031157">
    <property type="entry name" value="G_TR_CS"/>
</dbReference>
<dbReference type="InterPro" id="IPR027417">
    <property type="entry name" value="P-loop_NTPase"/>
</dbReference>
<dbReference type="InterPro" id="IPR005225">
    <property type="entry name" value="Small_GTP-bd"/>
</dbReference>
<dbReference type="InterPro" id="IPR000795">
    <property type="entry name" value="T_Tr_GTP-bd_dom"/>
</dbReference>
<dbReference type="InterPro" id="IPR009000">
    <property type="entry name" value="Transl_B-barrel_sf"/>
</dbReference>
<dbReference type="InterPro" id="IPR009001">
    <property type="entry name" value="Transl_elong_EF1A/Init_IF2_C"/>
</dbReference>
<dbReference type="InterPro" id="IPR004541">
    <property type="entry name" value="Transl_elong_EFTu/EF1A_bac/org"/>
</dbReference>
<dbReference type="InterPro" id="IPR004160">
    <property type="entry name" value="Transl_elong_EFTu/EF1A_C"/>
</dbReference>
<dbReference type="NCBIfam" id="TIGR00485">
    <property type="entry name" value="EF-Tu"/>
    <property type="match status" value="1"/>
</dbReference>
<dbReference type="NCBIfam" id="NF000766">
    <property type="entry name" value="PRK00049.1"/>
    <property type="match status" value="1"/>
</dbReference>
<dbReference type="NCBIfam" id="NF009372">
    <property type="entry name" value="PRK12735.1"/>
    <property type="match status" value="1"/>
</dbReference>
<dbReference type="NCBIfam" id="NF009373">
    <property type="entry name" value="PRK12736.1"/>
    <property type="match status" value="1"/>
</dbReference>
<dbReference type="NCBIfam" id="TIGR00231">
    <property type="entry name" value="small_GTP"/>
    <property type="match status" value="1"/>
</dbReference>
<dbReference type="PANTHER" id="PTHR43721:SF22">
    <property type="entry name" value="ELONGATION FACTOR TU, MITOCHONDRIAL"/>
    <property type="match status" value="1"/>
</dbReference>
<dbReference type="PANTHER" id="PTHR43721">
    <property type="entry name" value="ELONGATION FACTOR TU-RELATED"/>
    <property type="match status" value="1"/>
</dbReference>
<dbReference type="Pfam" id="PF00009">
    <property type="entry name" value="GTP_EFTU"/>
    <property type="match status" value="1"/>
</dbReference>
<dbReference type="Pfam" id="PF03144">
    <property type="entry name" value="GTP_EFTU_D2"/>
    <property type="match status" value="1"/>
</dbReference>
<dbReference type="Pfam" id="PF03143">
    <property type="entry name" value="GTP_EFTU_D3"/>
    <property type="match status" value="1"/>
</dbReference>
<dbReference type="PRINTS" id="PR00315">
    <property type="entry name" value="ELONGATNFCT"/>
</dbReference>
<dbReference type="SUPFAM" id="SSF50465">
    <property type="entry name" value="EF-Tu/eEF-1alpha/eIF2-gamma C-terminal domain"/>
    <property type="match status" value="1"/>
</dbReference>
<dbReference type="SUPFAM" id="SSF52540">
    <property type="entry name" value="P-loop containing nucleoside triphosphate hydrolases"/>
    <property type="match status" value="1"/>
</dbReference>
<dbReference type="SUPFAM" id="SSF50447">
    <property type="entry name" value="Translation proteins"/>
    <property type="match status" value="1"/>
</dbReference>
<dbReference type="PROSITE" id="PS00301">
    <property type="entry name" value="G_TR_1"/>
    <property type="match status" value="1"/>
</dbReference>
<dbReference type="PROSITE" id="PS51722">
    <property type="entry name" value="G_TR_2"/>
    <property type="match status" value="1"/>
</dbReference>